<sequence length="333" mass="37179">MGVPLLDVSQLQAGPEARKQYLQALVQSFRDYGFVRLTKHDVPAKRVQRIFDLSTQMFNLDIDSKLEFANIADGSPQRGYSAVGVEKTASLHGNLIGRRVDEKLTDAREHFDCGSPLDKSFANRWPEKLQGFQQELESFYFELEQVTAGILGSLEEALNCPPGTLNNMITKENNASELRLNHYPPVPAGTLRNGNVARIWPHFDLGVITLLFTSAVGGLEVEDRNAPGPQTFIPVEPETEAELIVNISETLQRWTDDHLPAGLHRVTIPKDLDTEIQNDANVEIPGRYSIAYLCKADREADVGTLPVFQTGEAPRYKAMTASEYHRSRLLTAY</sequence>
<keyword id="KW-0223">Dioxygenase</keyword>
<keyword id="KW-0408">Iron</keyword>
<keyword id="KW-0479">Metal-binding</keyword>
<keyword id="KW-0560">Oxidoreductase</keyword>
<name>UCSF_ACRSP</name>
<proteinExistence type="evidence at protein level"/>
<dbReference type="EC" id="1.14.11.-" evidence="2"/>
<dbReference type="EMBL" id="MH375769">
    <property type="protein sequence ID" value="QBC88150.1"/>
    <property type="molecule type" value="Genomic_DNA"/>
</dbReference>
<dbReference type="SMR" id="A0A411KUQ7"/>
<dbReference type="GO" id="GO:0051213">
    <property type="term" value="F:dioxygenase activity"/>
    <property type="evidence" value="ECO:0007669"/>
    <property type="project" value="UniProtKB-KW"/>
</dbReference>
<dbReference type="GO" id="GO:0046872">
    <property type="term" value="F:metal ion binding"/>
    <property type="evidence" value="ECO:0007669"/>
    <property type="project" value="UniProtKB-KW"/>
</dbReference>
<dbReference type="GO" id="GO:0044283">
    <property type="term" value="P:small molecule biosynthetic process"/>
    <property type="evidence" value="ECO:0007669"/>
    <property type="project" value="UniProtKB-ARBA"/>
</dbReference>
<dbReference type="Gene3D" id="2.60.120.330">
    <property type="entry name" value="B-lactam Antibiotic, Isopenicillin N Synthase, Chain"/>
    <property type="match status" value="1"/>
</dbReference>
<dbReference type="InterPro" id="IPR026992">
    <property type="entry name" value="DIOX_N"/>
</dbReference>
<dbReference type="InterPro" id="IPR044861">
    <property type="entry name" value="IPNS-like_FE2OG_OXY"/>
</dbReference>
<dbReference type="InterPro" id="IPR027443">
    <property type="entry name" value="IPNS-like_sf"/>
</dbReference>
<dbReference type="InterPro" id="IPR050231">
    <property type="entry name" value="Iron_ascorbate_oxido_reductase"/>
</dbReference>
<dbReference type="InterPro" id="IPR005123">
    <property type="entry name" value="Oxoglu/Fe-dep_dioxygenase_dom"/>
</dbReference>
<dbReference type="PANTHER" id="PTHR47990">
    <property type="entry name" value="2-OXOGLUTARATE (2OG) AND FE(II)-DEPENDENT OXYGENASE SUPERFAMILY PROTEIN-RELATED"/>
    <property type="match status" value="1"/>
</dbReference>
<dbReference type="Pfam" id="PF03171">
    <property type="entry name" value="2OG-FeII_Oxy"/>
    <property type="match status" value="1"/>
</dbReference>
<dbReference type="Pfam" id="PF14226">
    <property type="entry name" value="DIOX_N"/>
    <property type="match status" value="1"/>
</dbReference>
<dbReference type="SUPFAM" id="SSF51197">
    <property type="entry name" value="Clavaminate synthase-like"/>
    <property type="match status" value="1"/>
</dbReference>
<dbReference type="PROSITE" id="PS51471">
    <property type="entry name" value="FE2OG_OXY"/>
    <property type="match status" value="1"/>
</dbReference>
<protein>
    <recommendedName>
        <fullName evidence="3">2-oxoglutarate-dependent dioxygenase ucsF</fullName>
        <ecNumber evidence="2">1.14.11.-</ecNumber>
    </recommendedName>
    <alternativeName>
        <fullName evidence="3">UCS1025A pyrrolizidinone biosynthesis cluster protein F</fullName>
    </alternativeName>
</protein>
<feature type="chain" id="PRO_0000450536" description="2-oxoglutarate-dependent dioxygenase ucsF">
    <location>
        <begin position="1"/>
        <end position="333"/>
    </location>
</feature>
<feature type="domain" description="Fe2OG dioxygenase" evidence="1">
    <location>
        <begin position="174"/>
        <end position="296"/>
    </location>
</feature>
<feature type="binding site" evidence="1">
    <location>
        <position position="202"/>
    </location>
    <ligand>
        <name>Fe cation</name>
        <dbReference type="ChEBI" id="CHEBI:24875"/>
    </ligand>
</feature>
<feature type="binding site" evidence="1">
    <location>
        <position position="204"/>
    </location>
    <ligand>
        <name>Fe cation</name>
        <dbReference type="ChEBI" id="CHEBI:24875"/>
    </ligand>
</feature>
<feature type="binding site" evidence="1">
    <location>
        <position position="264"/>
    </location>
    <ligand>
        <name>Fe cation</name>
        <dbReference type="ChEBI" id="CHEBI:24875"/>
    </ligand>
</feature>
<feature type="binding site" evidence="1">
    <location>
        <position position="287"/>
    </location>
    <ligand>
        <name>2-oxoglutarate</name>
        <dbReference type="ChEBI" id="CHEBI:16810"/>
    </ligand>
</feature>
<gene>
    <name evidence="3" type="primary">ucsF</name>
</gene>
<organism>
    <name type="scientific">Acremonium sp</name>
    <dbReference type="NCBI Taxonomy" id="2046025"/>
    <lineage>
        <taxon>Eukaryota</taxon>
        <taxon>Fungi</taxon>
        <taxon>Dikarya</taxon>
        <taxon>Ascomycota</taxon>
        <taxon>Pezizomycotina</taxon>
        <taxon>Sordariomycetes</taxon>
        <taxon>Hypocreomycetidae</taxon>
        <taxon>Hypocreales</taxon>
        <taxon>Hypocreales incertae sedis</taxon>
        <taxon>Acremonium</taxon>
    </lineage>
</organism>
<evidence type="ECO:0000255" key="1">
    <source>
        <dbReference type="PROSITE-ProRule" id="PRU00805"/>
    </source>
</evidence>
<evidence type="ECO:0000269" key="2">
    <source>
    </source>
</evidence>
<evidence type="ECO:0000303" key="3">
    <source>
    </source>
</evidence>
<evidence type="ECO:0000305" key="4"/>
<evidence type="ECO:0000305" key="5">
    <source>
    </source>
</evidence>
<accession>A0A411KUQ7</accession>
<reference key="1">
    <citation type="journal article" date="2018" name="J. Am. Chem. Soc.">
        <title>Genome mining and assembly-line biosynthesis of the UCS1025A pyrrolizidinone family of fungal alkaloids.</title>
        <authorList>
            <person name="Li L."/>
            <person name="Tang M.C."/>
            <person name="Tang S."/>
            <person name="Gao S."/>
            <person name="Soliman S."/>
            <person name="Hang L."/>
            <person name="Xu W."/>
            <person name="Ye T."/>
            <person name="Watanabe K."/>
            <person name="Tang Y."/>
        </authorList>
    </citation>
    <scope>NUCLEOTIDE SEQUENCE [GENOMIC DNA]</scope>
    <scope>FUNCTION</scope>
    <scope>DISRUPTION PHENOTYPE</scope>
    <scope>CATALYTIC ACTIVITY</scope>
    <scope>PATHWAY</scope>
    <source>
        <strain>KY4917</strain>
    </source>
</reference>
<comment type="function">
    <text evidence="2 5">2-oxoglutarate-dependent dioxygenase; part of the gene cluster that mediates the biosynthesis of UCS1025A, a member of the pyrrolizidinone family that acts as a strong telomerase inhibitor and displays potent antibacterial and antitumor properties (PubMed:29373009). These compounds share a hemiaminal-containing pyrrolizidinone core fused with a gamma-lactone, giving a furopyrrolizidine that is connected to a decalin fragment (PubMed:29373009). The polyketide synthase module (PKS) of the PKS-NRPS ucsA is responsible for the synthesis of the polyketide backbone via the condensation of an acetyl-CoA starter unit with 6 malonyl-CoA units (PubMed:29373009). The downstream nonribosomal peptide synthetase (NRPS) module then amidates the carboxyl end of the polyketide with a 2S,3S-methylproline derived from L-isoleucine by the 2-oxoglutarate-dependent dioxygenase ucsF which converts L-isoleucine to (4S,5S)-4-methylpyrroline-5-carboxylate that is further converted to 2S,3S-methylproline by the pyrroline-5-carboxylate reductase ucsG (PubMed:29373009). Reductive release of the completed aminoacyl polyketide from the assembly line can form the 3-pyrrolin-2-one structure via an intramolecular Knoevenagel reaction (PubMed:29373009). Because ucsA lacks a designated enoylreductase (ER) domain, the required activity is provided the enoyl reductase ucsL (PubMed:29373009). This keto acyclic precursor is the substrate of the Diels-Alderase ucsH, that catalyzes the Diels-Alder cycloaddition (PubMed:29373009). Oxidation of the 3S-methyl group to a carboxylate by the cytochrome P450 monooxygenase ucsK allows an oxa-Michael cyclization that might involve the reductase/dehydrogenase ucsI and which furnishes the furopyrrolizidine (PubMed:29373009). The oxidase ucsJ likely plays a critical role in stereoselective reduction of the C5-C6 double bond to afford the required R-configured carboxylate group (Probable). Further enolization and oxidation at C5 by an unidentified enzyme affords the last intermediate that can undergo oxa-Michael cyclization to yield UCS1025A (Probable).</text>
</comment>
<comment type="cofactor">
    <cofactor evidence="1">
        <name>Fe(2+)</name>
        <dbReference type="ChEBI" id="CHEBI:29033"/>
    </cofactor>
    <text evidence="1">Binds 1 Fe(2+) ion per subunit.</text>
</comment>
<comment type="pathway">
    <text evidence="2">Mycotoxin biosynthesis.</text>
</comment>
<comment type="disruption phenotype">
    <text evidence="2">Leads to the complete abolishment of all products.</text>
</comment>
<comment type="similarity">
    <text evidence="4">Belongs to the iron/ascorbate-dependent oxidoreductase family.</text>
</comment>